<gene>
    <name evidence="1" type="primary">fabA</name>
    <name type="ordered locus">HDEF_2300</name>
</gene>
<sequence length="171" mass="18831">MMNEDGAYSKKDLEASSRGELFGPKGPRLPASNMLMIDRVITMTKDGGMHGKGYVEAELDVHPNLWFFGCHFIDDPVMPGCLGLDAMWQLVGFYLGWLENEGKGRALGVGEVKFKGQVLPDSKKITYCIDFKKVITGKLIMGIADGKVLSDGQQIYTADDLKVGLFKNTSF</sequence>
<dbReference type="EC" id="4.2.1.59" evidence="1"/>
<dbReference type="EC" id="5.3.3.14" evidence="1"/>
<dbReference type="EMBL" id="CP001277">
    <property type="protein sequence ID" value="ACQ68838.1"/>
    <property type="molecule type" value="Genomic_DNA"/>
</dbReference>
<dbReference type="RefSeq" id="WP_015874558.1">
    <property type="nucleotide sequence ID" value="NC_012751.1"/>
</dbReference>
<dbReference type="SMR" id="C4K8W9"/>
<dbReference type="STRING" id="572265.HDEF_2300"/>
<dbReference type="GeneID" id="66261792"/>
<dbReference type="KEGG" id="hde:HDEF_2300"/>
<dbReference type="eggNOG" id="COG0764">
    <property type="taxonomic scope" value="Bacteria"/>
</dbReference>
<dbReference type="HOGENOM" id="CLU_097925_0_0_6"/>
<dbReference type="UniPathway" id="UPA00094"/>
<dbReference type="Proteomes" id="UP000002334">
    <property type="component" value="Chromosome"/>
</dbReference>
<dbReference type="GO" id="GO:0005737">
    <property type="term" value="C:cytoplasm"/>
    <property type="evidence" value="ECO:0007669"/>
    <property type="project" value="UniProtKB-SubCell"/>
</dbReference>
<dbReference type="GO" id="GO:0019171">
    <property type="term" value="F:(3R)-hydroxyacyl-[acyl-carrier-protein] dehydratase activity"/>
    <property type="evidence" value="ECO:0007669"/>
    <property type="project" value="UniProtKB-UniRule"/>
</dbReference>
<dbReference type="GO" id="GO:0034017">
    <property type="term" value="F:trans-2-decenoyl-acyl-carrier-protein isomerase activity"/>
    <property type="evidence" value="ECO:0007669"/>
    <property type="project" value="UniProtKB-UniRule"/>
</dbReference>
<dbReference type="GO" id="GO:0006636">
    <property type="term" value="P:unsaturated fatty acid biosynthetic process"/>
    <property type="evidence" value="ECO:0007669"/>
    <property type="project" value="UniProtKB-UniRule"/>
</dbReference>
<dbReference type="CDD" id="cd01287">
    <property type="entry name" value="FabA"/>
    <property type="match status" value="1"/>
</dbReference>
<dbReference type="Gene3D" id="3.10.129.10">
    <property type="entry name" value="Hotdog Thioesterase"/>
    <property type="match status" value="1"/>
</dbReference>
<dbReference type="HAMAP" id="MF_00405">
    <property type="entry name" value="FabA"/>
    <property type="match status" value="1"/>
</dbReference>
<dbReference type="InterPro" id="IPR010083">
    <property type="entry name" value="FabA"/>
</dbReference>
<dbReference type="InterPro" id="IPR013114">
    <property type="entry name" value="FabA_FabZ"/>
</dbReference>
<dbReference type="InterPro" id="IPR029069">
    <property type="entry name" value="HotDog_dom_sf"/>
</dbReference>
<dbReference type="NCBIfam" id="TIGR01749">
    <property type="entry name" value="fabA"/>
    <property type="match status" value="1"/>
</dbReference>
<dbReference type="NCBIfam" id="NF003509">
    <property type="entry name" value="PRK05174.1"/>
    <property type="match status" value="1"/>
</dbReference>
<dbReference type="PANTHER" id="PTHR30272">
    <property type="entry name" value="3-HYDROXYACYL-[ACYL-CARRIER-PROTEIN] DEHYDRATASE"/>
    <property type="match status" value="1"/>
</dbReference>
<dbReference type="PANTHER" id="PTHR30272:SF8">
    <property type="entry name" value="3-HYDROXYDECANOYL-[ACYL-CARRIER-PROTEIN] DEHYDRATASE"/>
    <property type="match status" value="1"/>
</dbReference>
<dbReference type="Pfam" id="PF07977">
    <property type="entry name" value="FabA"/>
    <property type="match status" value="1"/>
</dbReference>
<dbReference type="SUPFAM" id="SSF54637">
    <property type="entry name" value="Thioesterase/thiol ester dehydrase-isomerase"/>
    <property type="match status" value="1"/>
</dbReference>
<keyword id="KW-0963">Cytoplasm</keyword>
<keyword id="KW-0275">Fatty acid biosynthesis</keyword>
<keyword id="KW-0276">Fatty acid metabolism</keyword>
<keyword id="KW-0413">Isomerase</keyword>
<keyword id="KW-0444">Lipid biosynthesis</keyword>
<keyword id="KW-0443">Lipid metabolism</keyword>
<keyword id="KW-0456">Lyase</keyword>
<evidence type="ECO:0000255" key="1">
    <source>
        <dbReference type="HAMAP-Rule" id="MF_00405"/>
    </source>
</evidence>
<feature type="chain" id="PRO_1000205934" description="3-hydroxydecanoyl-[acyl-carrier-protein] dehydratase">
    <location>
        <begin position="1"/>
        <end position="171"/>
    </location>
</feature>
<feature type="active site" evidence="1">
    <location>
        <position position="71"/>
    </location>
</feature>
<comment type="function">
    <text evidence="1">Necessary for the introduction of cis unsaturation into fatty acids. Catalyzes the dehydration of (3R)-3-hydroxydecanoyl-ACP to E-(2)-decenoyl-ACP and then its isomerization to Z-(3)-decenoyl-ACP. Can catalyze the dehydratase reaction for beta-hydroxyacyl-ACPs with saturated chain lengths up to 16:0, being most active on intermediate chain length.</text>
</comment>
<comment type="catalytic activity">
    <reaction evidence="1">
        <text>a (3R)-hydroxyacyl-[ACP] = a (2E)-enoyl-[ACP] + H2O</text>
        <dbReference type="Rhea" id="RHEA:13097"/>
        <dbReference type="Rhea" id="RHEA-COMP:9925"/>
        <dbReference type="Rhea" id="RHEA-COMP:9945"/>
        <dbReference type="ChEBI" id="CHEBI:15377"/>
        <dbReference type="ChEBI" id="CHEBI:78784"/>
        <dbReference type="ChEBI" id="CHEBI:78827"/>
        <dbReference type="EC" id="4.2.1.59"/>
    </reaction>
</comment>
<comment type="catalytic activity">
    <reaction evidence="1">
        <text>(3R)-hydroxydecanoyl-[ACP] = (2E)-decenoyl-[ACP] + H2O</text>
        <dbReference type="Rhea" id="RHEA:41860"/>
        <dbReference type="Rhea" id="RHEA-COMP:9638"/>
        <dbReference type="Rhea" id="RHEA-COMP:9639"/>
        <dbReference type="ChEBI" id="CHEBI:15377"/>
        <dbReference type="ChEBI" id="CHEBI:78466"/>
        <dbReference type="ChEBI" id="CHEBI:78467"/>
    </reaction>
</comment>
<comment type="catalytic activity">
    <reaction evidence="1">
        <text>(2E)-decenoyl-[ACP] = (3Z)-decenoyl-[ACP]</text>
        <dbReference type="Rhea" id="RHEA:23568"/>
        <dbReference type="Rhea" id="RHEA-COMP:9639"/>
        <dbReference type="Rhea" id="RHEA-COMP:9927"/>
        <dbReference type="ChEBI" id="CHEBI:78467"/>
        <dbReference type="ChEBI" id="CHEBI:78798"/>
        <dbReference type="EC" id="5.3.3.14"/>
    </reaction>
</comment>
<comment type="pathway">
    <text evidence="1">Lipid metabolism; fatty acid biosynthesis.</text>
</comment>
<comment type="subunit">
    <text evidence="1">Homodimer.</text>
</comment>
<comment type="subcellular location">
    <subcellularLocation>
        <location evidence="1">Cytoplasm</location>
    </subcellularLocation>
</comment>
<comment type="similarity">
    <text evidence="1">Belongs to the thioester dehydratase family. FabA subfamily.</text>
</comment>
<protein>
    <recommendedName>
        <fullName evidence="1">3-hydroxydecanoyl-[acyl-carrier-protein] dehydratase</fullName>
        <ecNumber evidence="1">4.2.1.59</ecNumber>
    </recommendedName>
    <alternativeName>
        <fullName evidence="1">3-hydroxyacyl-[acyl-carrier-protein] dehydratase FabA</fullName>
    </alternativeName>
    <alternativeName>
        <fullName evidence="1">Beta-hydroxydecanoyl thioester dehydrase</fullName>
    </alternativeName>
    <alternativeName>
        <fullName evidence="1">Trans-2-decenoyl-[acyl-carrier-protein] isomerase</fullName>
        <ecNumber evidence="1">5.3.3.14</ecNumber>
    </alternativeName>
</protein>
<name>FABA_HAMD5</name>
<reference key="1">
    <citation type="journal article" date="2009" name="Proc. Natl. Acad. Sci. U.S.A.">
        <title>Hamiltonella defensa, genome evolution of protective bacterial endosymbiont from pathogenic ancestors.</title>
        <authorList>
            <person name="Degnan P.H."/>
            <person name="Yu Y."/>
            <person name="Sisneros N."/>
            <person name="Wing R.A."/>
            <person name="Moran N.A."/>
        </authorList>
    </citation>
    <scope>NUCLEOTIDE SEQUENCE [LARGE SCALE GENOMIC DNA]</scope>
    <source>
        <strain>5AT</strain>
    </source>
</reference>
<organism>
    <name type="scientific">Hamiltonella defensa subsp. Acyrthosiphon pisum (strain 5AT)</name>
    <dbReference type="NCBI Taxonomy" id="572265"/>
    <lineage>
        <taxon>Bacteria</taxon>
        <taxon>Pseudomonadati</taxon>
        <taxon>Pseudomonadota</taxon>
        <taxon>Gammaproteobacteria</taxon>
        <taxon>Enterobacterales</taxon>
        <taxon>Enterobacteriaceae</taxon>
        <taxon>aphid secondary symbionts</taxon>
        <taxon>Candidatus Hamiltonella</taxon>
    </lineage>
</organism>
<accession>C4K8W9</accession>
<proteinExistence type="inferred from homology"/>